<organism>
    <name type="scientific">Danio rerio</name>
    <name type="common">Zebrafish</name>
    <name type="synonym">Brachydanio rerio</name>
    <dbReference type="NCBI Taxonomy" id="7955"/>
    <lineage>
        <taxon>Eukaryota</taxon>
        <taxon>Metazoa</taxon>
        <taxon>Chordata</taxon>
        <taxon>Craniata</taxon>
        <taxon>Vertebrata</taxon>
        <taxon>Euteleostomi</taxon>
        <taxon>Actinopterygii</taxon>
        <taxon>Neopterygii</taxon>
        <taxon>Teleostei</taxon>
        <taxon>Ostariophysi</taxon>
        <taxon>Cypriniformes</taxon>
        <taxon>Danionidae</taxon>
        <taxon>Danioninae</taxon>
        <taxon>Danio</taxon>
    </lineage>
</organism>
<keyword id="KW-0175">Coiled coil</keyword>
<keyword id="KW-0507">mRNA processing</keyword>
<keyword id="KW-0508">mRNA splicing</keyword>
<keyword id="KW-0539">Nucleus</keyword>
<keyword id="KW-1185">Reference proteome</keyword>
<keyword id="KW-0687">Ribonucleoprotein</keyword>
<keyword id="KW-0694">RNA-binding</keyword>
<keyword id="KW-0747">Spliceosome</keyword>
<feature type="chain" id="PRO_0000227801" description="U4/U6 small nuclear ribonucleoprotein Prp31">
    <location>
        <begin position="1"/>
        <end position="508"/>
    </location>
</feature>
<feature type="domain" description="Nop" evidence="2">
    <location>
        <begin position="226"/>
        <end position="344"/>
    </location>
</feature>
<feature type="region of interest" description="Disordered" evidence="3">
    <location>
        <begin position="1"/>
        <end position="45"/>
    </location>
</feature>
<feature type="region of interest" description="Disordered" evidence="3">
    <location>
        <begin position="345"/>
        <end position="368"/>
    </location>
</feature>
<feature type="region of interest" description="Disordered" evidence="3">
    <location>
        <begin position="442"/>
        <end position="461"/>
    </location>
</feature>
<feature type="coiled-coil region" evidence="1">
    <location>
        <begin position="96"/>
        <end position="131"/>
    </location>
</feature>
<feature type="coiled-coil region" evidence="1">
    <location>
        <begin position="192"/>
        <end position="226"/>
    </location>
</feature>
<feature type="short sequence motif" description="Nuclear localization signal (NLS)" evidence="1">
    <location>
        <begin position="362"/>
        <end position="375"/>
    </location>
</feature>
<feature type="compositionally biased region" description="Acidic residues" evidence="3">
    <location>
        <begin position="7"/>
        <end position="32"/>
    </location>
</feature>
<feature type="site" description="Interaction with U4 snRNA" evidence="1">
    <location>
        <position position="258"/>
    </location>
</feature>
<feature type="site" description="Interaction with U4 snRNA and U4atac snRNA" evidence="1">
    <location>
        <position position="281"/>
    </location>
</feature>
<feature type="site" description="Interaction with U4atac snRNA" evidence="1">
    <location>
        <position position="300"/>
    </location>
</feature>
<feature type="site" description="Interaction with U4 snRNA and U4atac snRNA" evidence="1">
    <location>
        <position position="304"/>
    </location>
</feature>
<feature type="site" description="Interaction with U4 snRNA and U4atac snRNA" evidence="1">
    <location>
        <position position="309"/>
    </location>
</feature>
<proteinExistence type="evidence at transcript level"/>
<comment type="function">
    <text evidence="1">Involved in pre-mRNA splicing as component of the spliceosome. Required for the assembly of the U4/U5/U6 tri-snRNP complex, one of the building blocks of the spliceosome.</text>
</comment>
<comment type="subunit">
    <text evidence="1">Identified in the spliceosome B complex. Component of the U4/U6-U5 tri-snRNP complex. Component of some MLL1/MLL complex.</text>
</comment>
<comment type="subcellular location">
    <subcellularLocation>
        <location evidence="1">Nucleus</location>
    </subcellularLocation>
    <subcellularLocation>
        <location evidence="1">Nucleus speckle</location>
    </subcellularLocation>
    <subcellularLocation>
        <location evidence="1">Nucleus</location>
        <location evidence="1">Cajal body</location>
    </subcellularLocation>
    <text evidence="1">Predominantly found in speckles and in Cajal bodies.</text>
</comment>
<comment type="domain">
    <text evidence="1">Interacts with the snRNP via the Nop domain.</text>
</comment>
<comment type="domain">
    <text evidence="1">The coiled coil domain is formed by two non-contiguous helices.</text>
</comment>
<comment type="similarity">
    <text evidence="4">Belongs to the PRP31 family.</text>
</comment>
<sequence>MSLADELLADLEEAGEEDGLYPGGEEGESDGEPGERQVDGGLEDIPEEMEVDYSSTESVTSIAKLRHSKPFAEIMDKISHYVGNQRKNSEVSGPVEADPEYRLIVAANNLTVEIDNELNIIHKFVRDKYSKRFPELESLVPNALDYIRTVKELGNNLEKCKNNETLQQILTNATIMVVSVTASTTQGTMLGDDELQRLEEACDMALELNQSKHRIYEYVESRMSFIAPNLSIIVGASTAAKIMGVAGGLTNLSKMPACNLMLLGAQRRTLSGFSSTSLLPHTGYIYHCDVVQTLPPDLRRKAARLVSAKCTLASRVDSFHESADGKVGYDLKEEIERKFDKWQEPPPVKQVKPLPAPLDGQRKKRGGRRYRKMKERLGLTEIRKHANRMTFAEIEDDAYQEDLGFSLGQLGKSGSGRVRQAQVNDSTKARISKSLQRTLQKQSMTYGGKSTVRDRSSGTSSSVAFTPLQGLEIVNPQAAEKKVAEANQKYFSNMAEFLKVKREKEDKV</sequence>
<evidence type="ECO:0000250" key="1">
    <source>
        <dbReference type="UniProtKB" id="Q8WWY3"/>
    </source>
</evidence>
<evidence type="ECO:0000255" key="2">
    <source>
        <dbReference type="PROSITE-ProRule" id="PRU00690"/>
    </source>
</evidence>
<evidence type="ECO:0000256" key="3">
    <source>
        <dbReference type="SAM" id="MobiDB-lite"/>
    </source>
</evidence>
<evidence type="ECO:0000305" key="4"/>
<dbReference type="EMBL" id="BC055531">
    <property type="protein sequence ID" value="AAH55531.1"/>
    <property type="molecule type" value="mRNA"/>
</dbReference>
<dbReference type="RefSeq" id="NP_956798.1">
    <property type="nucleotide sequence ID" value="NM_200504.2"/>
</dbReference>
<dbReference type="SMR" id="Q7SXM7"/>
<dbReference type="FunCoup" id="Q7SXM7">
    <property type="interactions" value="2639"/>
</dbReference>
<dbReference type="STRING" id="7955.ENSDARP00000120708"/>
<dbReference type="PaxDb" id="7955-ENSDARP00000120708"/>
<dbReference type="Ensembl" id="ENSDART00000137029">
    <property type="protein sequence ID" value="ENSDARP00000120708"/>
    <property type="gene ID" value="ENSDARG00000095904"/>
</dbReference>
<dbReference type="Ensembl" id="ENSDART00000190122">
    <property type="protein sequence ID" value="ENSDARP00000157055"/>
    <property type="gene ID" value="ENSDARG00000095904"/>
</dbReference>
<dbReference type="GeneID" id="393476"/>
<dbReference type="KEGG" id="dre:393476"/>
<dbReference type="AGR" id="ZFIN:ZDB-GENE-040426-1561"/>
<dbReference type="CTD" id="26121"/>
<dbReference type="ZFIN" id="ZDB-GENE-040426-1561">
    <property type="gene designation" value="prpf31"/>
</dbReference>
<dbReference type="eggNOG" id="KOG2574">
    <property type="taxonomic scope" value="Eukaryota"/>
</dbReference>
<dbReference type="HOGENOM" id="CLU_026337_2_0_1"/>
<dbReference type="InParanoid" id="Q7SXM7"/>
<dbReference type="OMA" id="IGNGPMD"/>
<dbReference type="OrthoDB" id="4771285at2759"/>
<dbReference type="PhylomeDB" id="Q7SXM7"/>
<dbReference type="TreeFam" id="TF300677"/>
<dbReference type="PRO" id="PR:Q7SXM7"/>
<dbReference type="Proteomes" id="UP000000437">
    <property type="component" value="Chromosome 16"/>
</dbReference>
<dbReference type="Bgee" id="ENSDARG00000095904">
    <property type="expression patterns" value="Expressed in early embryo and 29 other cell types or tissues"/>
</dbReference>
<dbReference type="ExpressionAtlas" id="Q7SXM7">
    <property type="expression patterns" value="baseline"/>
</dbReference>
<dbReference type="GO" id="GO:0015030">
    <property type="term" value="C:Cajal body"/>
    <property type="evidence" value="ECO:0007669"/>
    <property type="project" value="UniProtKB-SubCell"/>
</dbReference>
<dbReference type="GO" id="GO:0071339">
    <property type="term" value="C:MLL1 complex"/>
    <property type="evidence" value="ECO:0000250"/>
    <property type="project" value="UniProtKB"/>
</dbReference>
<dbReference type="GO" id="GO:0016607">
    <property type="term" value="C:nuclear speck"/>
    <property type="evidence" value="ECO:0007669"/>
    <property type="project" value="UniProtKB-SubCell"/>
</dbReference>
<dbReference type="GO" id="GO:0005634">
    <property type="term" value="C:nucleus"/>
    <property type="evidence" value="ECO:0000250"/>
    <property type="project" value="UniProtKB"/>
</dbReference>
<dbReference type="GO" id="GO:0071011">
    <property type="term" value="C:precatalytic spliceosome"/>
    <property type="evidence" value="ECO:0000318"/>
    <property type="project" value="GO_Central"/>
</dbReference>
<dbReference type="GO" id="GO:0097526">
    <property type="term" value="C:spliceosomal tri-snRNP complex"/>
    <property type="evidence" value="ECO:0000318"/>
    <property type="project" value="GO_Central"/>
</dbReference>
<dbReference type="GO" id="GO:0071005">
    <property type="term" value="C:U2-type precatalytic spliceosome"/>
    <property type="evidence" value="ECO:0000250"/>
    <property type="project" value="UniProtKB"/>
</dbReference>
<dbReference type="GO" id="GO:0005687">
    <property type="term" value="C:U4 snRNP"/>
    <property type="evidence" value="ECO:0000318"/>
    <property type="project" value="GO_Central"/>
</dbReference>
<dbReference type="GO" id="GO:0046540">
    <property type="term" value="C:U4/U6 x U5 tri-snRNP complex"/>
    <property type="evidence" value="ECO:0000250"/>
    <property type="project" value="UniProtKB"/>
</dbReference>
<dbReference type="GO" id="GO:0005690">
    <property type="term" value="C:U4atac snRNP"/>
    <property type="evidence" value="ECO:0000250"/>
    <property type="project" value="UniProtKB"/>
</dbReference>
<dbReference type="GO" id="GO:0030622">
    <property type="term" value="F:U4atac snRNA binding"/>
    <property type="evidence" value="ECO:0000250"/>
    <property type="project" value="UniProtKB"/>
</dbReference>
<dbReference type="GO" id="GO:0000398">
    <property type="term" value="P:mRNA splicing, via spliceosome"/>
    <property type="evidence" value="ECO:0000315"/>
    <property type="project" value="ZFIN"/>
</dbReference>
<dbReference type="GO" id="GO:0000381">
    <property type="term" value="P:regulation of alternative mRNA splicing, via spliceosome"/>
    <property type="evidence" value="ECO:0000315"/>
    <property type="project" value="ZFIN"/>
</dbReference>
<dbReference type="GO" id="GO:0060041">
    <property type="term" value="P:retina development in camera-type eye"/>
    <property type="evidence" value="ECO:0000315"/>
    <property type="project" value="ZFIN"/>
</dbReference>
<dbReference type="GO" id="GO:0000244">
    <property type="term" value="P:spliceosomal tri-snRNP complex assembly"/>
    <property type="evidence" value="ECO:0007669"/>
    <property type="project" value="InterPro"/>
</dbReference>
<dbReference type="FunFam" id="1.10.287.4070:FF:000003">
    <property type="entry name" value="U4/U6 small nuclear ribonucleoprotein PRP31"/>
    <property type="match status" value="1"/>
</dbReference>
<dbReference type="FunFam" id="1.10.246.90:FF:000002">
    <property type="entry name" value="U4/U6 small nuclear ribonucleoprotein Prp31"/>
    <property type="match status" value="1"/>
</dbReference>
<dbReference type="Gene3D" id="1.10.287.4070">
    <property type="match status" value="1"/>
</dbReference>
<dbReference type="Gene3D" id="1.10.246.90">
    <property type="entry name" value="Nop domain"/>
    <property type="match status" value="1"/>
</dbReference>
<dbReference type="InterPro" id="IPR042239">
    <property type="entry name" value="Nop_C"/>
</dbReference>
<dbReference type="InterPro" id="IPR002687">
    <property type="entry name" value="Nop_dom"/>
</dbReference>
<dbReference type="InterPro" id="IPR036070">
    <property type="entry name" value="Nop_dom_sf"/>
</dbReference>
<dbReference type="InterPro" id="IPR012976">
    <property type="entry name" value="NOSIC"/>
</dbReference>
<dbReference type="InterPro" id="IPR027105">
    <property type="entry name" value="Prp31"/>
</dbReference>
<dbReference type="InterPro" id="IPR019175">
    <property type="entry name" value="Prp31_C"/>
</dbReference>
<dbReference type="PANTHER" id="PTHR13904">
    <property type="entry name" value="PRE-MRNA SPLICING FACTOR PRP31"/>
    <property type="match status" value="1"/>
</dbReference>
<dbReference type="PANTHER" id="PTHR13904:SF0">
    <property type="entry name" value="U4_U6 SMALL NUCLEAR RIBONUCLEOPROTEIN PRP31"/>
    <property type="match status" value="1"/>
</dbReference>
<dbReference type="Pfam" id="PF01798">
    <property type="entry name" value="Nop"/>
    <property type="match status" value="1"/>
</dbReference>
<dbReference type="Pfam" id="PF09785">
    <property type="entry name" value="Prp31_C"/>
    <property type="match status" value="1"/>
</dbReference>
<dbReference type="SMART" id="SM00931">
    <property type="entry name" value="NOSIC"/>
    <property type="match status" value="1"/>
</dbReference>
<dbReference type="SUPFAM" id="SSF89124">
    <property type="entry name" value="Nop domain"/>
    <property type="match status" value="1"/>
</dbReference>
<dbReference type="PROSITE" id="PS51358">
    <property type="entry name" value="NOP"/>
    <property type="match status" value="1"/>
</dbReference>
<accession>Q7SXM7</accession>
<name>PRP31_DANRE</name>
<reference key="1">
    <citation type="submission" date="2003-08" db="EMBL/GenBank/DDBJ databases">
        <authorList>
            <consortium name="NIH - Zebrafish Gene Collection (ZGC) project"/>
        </authorList>
    </citation>
    <scope>NUCLEOTIDE SEQUENCE [LARGE SCALE MRNA]</scope>
</reference>
<gene>
    <name type="primary">prpf31</name>
</gene>
<protein>
    <recommendedName>
        <fullName>U4/U6 small nuclear ribonucleoprotein Prp31</fullName>
    </recommendedName>
    <alternativeName>
        <fullName>Pre-mRNA-processing factor 31</fullName>
    </alternativeName>
</protein>